<name>MNMA_FRACC</name>
<organism>
    <name type="scientific">Frankia casuarinae (strain DSM 45818 / CECT 9043 / HFP020203 / CcI3)</name>
    <dbReference type="NCBI Taxonomy" id="106370"/>
    <lineage>
        <taxon>Bacteria</taxon>
        <taxon>Bacillati</taxon>
        <taxon>Actinomycetota</taxon>
        <taxon>Actinomycetes</taxon>
        <taxon>Frankiales</taxon>
        <taxon>Frankiaceae</taxon>
        <taxon>Frankia</taxon>
    </lineage>
</organism>
<keyword id="KW-0067">ATP-binding</keyword>
<keyword id="KW-0963">Cytoplasm</keyword>
<keyword id="KW-1015">Disulfide bond</keyword>
<keyword id="KW-0547">Nucleotide-binding</keyword>
<keyword id="KW-1185">Reference proteome</keyword>
<keyword id="KW-0694">RNA-binding</keyword>
<keyword id="KW-0808">Transferase</keyword>
<keyword id="KW-0819">tRNA processing</keyword>
<keyword id="KW-0820">tRNA-binding</keyword>
<sequence length="352" mass="37337">MRVLAAMSGGVDSAVAAARAVDAGHDVTGVHLALSRSPESDRTGARGCCTIEDARDARRAADILGIPFYVWDLADRFETDVIEEFVESYAAGRTPNPCVRCNERIKFAAVLDKALALGFEAVVTGHHARLDPDGTLRRSVDPDKDQSYVLGTLRPEQLAAARFPLGDSTKAQVRVEAAERRLAVADKPDSHDICFISHGDTGGWLRERLGPRPGPVIDATTGQTLGHHDGAYAFTVGQRRGLKLGRPAADGRPRYVLDISPVTSTVTVGPAEALDVRRLVADRAVWPHEGAVSCLAQVRAHGGVVPAVAQARDEELVVTLTTPVRGTAAGQAVVLYDGDRVLGGGHIRTTGG</sequence>
<gene>
    <name evidence="1" type="primary">mnmA</name>
    <name type="synonym">trmU</name>
    <name type="ordered locus">Francci3_3649</name>
</gene>
<evidence type="ECO:0000255" key="1">
    <source>
        <dbReference type="HAMAP-Rule" id="MF_00144"/>
    </source>
</evidence>
<comment type="function">
    <text evidence="1">Catalyzes the 2-thiolation of uridine at the wobble position (U34) of tRNA, leading to the formation of s(2)U34.</text>
</comment>
<comment type="catalytic activity">
    <reaction evidence="1">
        <text>S-sulfanyl-L-cysteinyl-[protein] + uridine(34) in tRNA + AH2 + ATP = 2-thiouridine(34) in tRNA + L-cysteinyl-[protein] + A + AMP + diphosphate + H(+)</text>
        <dbReference type="Rhea" id="RHEA:47032"/>
        <dbReference type="Rhea" id="RHEA-COMP:10131"/>
        <dbReference type="Rhea" id="RHEA-COMP:11726"/>
        <dbReference type="Rhea" id="RHEA-COMP:11727"/>
        <dbReference type="Rhea" id="RHEA-COMP:11728"/>
        <dbReference type="ChEBI" id="CHEBI:13193"/>
        <dbReference type="ChEBI" id="CHEBI:15378"/>
        <dbReference type="ChEBI" id="CHEBI:17499"/>
        <dbReference type="ChEBI" id="CHEBI:29950"/>
        <dbReference type="ChEBI" id="CHEBI:30616"/>
        <dbReference type="ChEBI" id="CHEBI:33019"/>
        <dbReference type="ChEBI" id="CHEBI:61963"/>
        <dbReference type="ChEBI" id="CHEBI:65315"/>
        <dbReference type="ChEBI" id="CHEBI:87170"/>
        <dbReference type="ChEBI" id="CHEBI:456215"/>
        <dbReference type="EC" id="2.8.1.13"/>
    </reaction>
</comment>
<comment type="subcellular location">
    <subcellularLocation>
        <location evidence="1">Cytoplasm</location>
    </subcellularLocation>
</comment>
<comment type="similarity">
    <text evidence="1">Belongs to the MnmA/TRMU family.</text>
</comment>
<reference key="1">
    <citation type="journal article" date="2007" name="Genome Res.">
        <title>Genome characteristics of facultatively symbiotic Frankia sp. strains reflect host range and host plant biogeography.</title>
        <authorList>
            <person name="Normand P."/>
            <person name="Lapierre P."/>
            <person name="Tisa L.S."/>
            <person name="Gogarten J.P."/>
            <person name="Alloisio N."/>
            <person name="Bagnarol E."/>
            <person name="Bassi C.A."/>
            <person name="Berry A.M."/>
            <person name="Bickhart D.M."/>
            <person name="Choisne N."/>
            <person name="Couloux A."/>
            <person name="Cournoyer B."/>
            <person name="Cruveiller S."/>
            <person name="Daubin V."/>
            <person name="Demange N."/>
            <person name="Francino M.P."/>
            <person name="Goltsman E."/>
            <person name="Huang Y."/>
            <person name="Kopp O.R."/>
            <person name="Labarre L."/>
            <person name="Lapidus A."/>
            <person name="Lavire C."/>
            <person name="Marechal J."/>
            <person name="Martinez M."/>
            <person name="Mastronunzio J.E."/>
            <person name="Mullin B.C."/>
            <person name="Niemann J."/>
            <person name="Pujic P."/>
            <person name="Rawnsley T."/>
            <person name="Rouy Z."/>
            <person name="Schenowitz C."/>
            <person name="Sellstedt A."/>
            <person name="Tavares F."/>
            <person name="Tomkins J.P."/>
            <person name="Vallenet D."/>
            <person name="Valverde C."/>
            <person name="Wall L.G."/>
            <person name="Wang Y."/>
            <person name="Medigue C."/>
            <person name="Benson D.R."/>
        </authorList>
    </citation>
    <scope>NUCLEOTIDE SEQUENCE [LARGE SCALE GENOMIC DNA]</scope>
    <source>
        <strain>DSM 45818 / CECT 9043 / HFP020203 / CcI3</strain>
    </source>
</reference>
<proteinExistence type="inferred from homology"/>
<dbReference type="EC" id="2.8.1.13" evidence="1"/>
<dbReference type="EMBL" id="CP000249">
    <property type="protein sequence ID" value="ABD13001.1"/>
    <property type="molecule type" value="Genomic_DNA"/>
</dbReference>
<dbReference type="RefSeq" id="WP_011438025.1">
    <property type="nucleotide sequence ID" value="NZ_LRTJ01000033.1"/>
</dbReference>
<dbReference type="SMR" id="Q2J6U1"/>
<dbReference type="STRING" id="106370.Francci3_3649"/>
<dbReference type="KEGG" id="fra:Francci3_3649"/>
<dbReference type="eggNOG" id="COG0482">
    <property type="taxonomic scope" value="Bacteria"/>
</dbReference>
<dbReference type="HOGENOM" id="CLU_035188_0_2_11"/>
<dbReference type="OrthoDB" id="9800696at2"/>
<dbReference type="PhylomeDB" id="Q2J6U1"/>
<dbReference type="Proteomes" id="UP000001937">
    <property type="component" value="Chromosome"/>
</dbReference>
<dbReference type="GO" id="GO:0005737">
    <property type="term" value="C:cytoplasm"/>
    <property type="evidence" value="ECO:0007669"/>
    <property type="project" value="UniProtKB-SubCell"/>
</dbReference>
<dbReference type="GO" id="GO:0005524">
    <property type="term" value="F:ATP binding"/>
    <property type="evidence" value="ECO:0007669"/>
    <property type="project" value="UniProtKB-KW"/>
</dbReference>
<dbReference type="GO" id="GO:0000049">
    <property type="term" value="F:tRNA binding"/>
    <property type="evidence" value="ECO:0007669"/>
    <property type="project" value="UniProtKB-KW"/>
</dbReference>
<dbReference type="GO" id="GO:0103016">
    <property type="term" value="F:tRNA-uridine 2-sulfurtransferase activity"/>
    <property type="evidence" value="ECO:0007669"/>
    <property type="project" value="UniProtKB-EC"/>
</dbReference>
<dbReference type="GO" id="GO:0002143">
    <property type="term" value="P:tRNA wobble position uridine thiolation"/>
    <property type="evidence" value="ECO:0007669"/>
    <property type="project" value="TreeGrafter"/>
</dbReference>
<dbReference type="CDD" id="cd01998">
    <property type="entry name" value="MnmA_TRMU-like"/>
    <property type="match status" value="1"/>
</dbReference>
<dbReference type="FunFam" id="3.40.50.620:FF:000057">
    <property type="entry name" value="tRNA-specific 2-thiouridylase MnmA"/>
    <property type="match status" value="1"/>
</dbReference>
<dbReference type="Gene3D" id="2.30.30.280">
    <property type="entry name" value="Adenine nucleotide alpha hydrolases-like domains"/>
    <property type="match status" value="1"/>
</dbReference>
<dbReference type="Gene3D" id="3.40.50.620">
    <property type="entry name" value="HUPs"/>
    <property type="match status" value="1"/>
</dbReference>
<dbReference type="Gene3D" id="2.40.30.10">
    <property type="entry name" value="Translation factors"/>
    <property type="match status" value="1"/>
</dbReference>
<dbReference type="HAMAP" id="MF_00144">
    <property type="entry name" value="tRNA_thiouridyl_MnmA"/>
    <property type="match status" value="1"/>
</dbReference>
<dbReference type="InterPro" id="IPR004506">
    <property type="entry name" value="MnmA-like"/>
</dbReference>
<dbReference type="InterPro" id="IPR046885">
    <property type="entry name" value="MnmA-like_C"/>
</dbReference>
<dbReference type="InterPro" id="IPR046884">
    <property type="entry name" value="MnmA-like_central"/>
</dbReference>
<dbReference type="InterPro" id="IPR023382">
    <property type="entry name" value="MnmA-like_central_sf"/>
</dbReference>
<dbReference type="InterPro" id="IPR014729">
    <property type="entry name" value="Rossmann-like_a/b/a_fold"/>
</dbReference>
<dbReference type="NCBIfam" id="NF001138">
    <property type="entry name" value="PRK00143.1"/>
    <property type="match status" value="1"/>
</dbReference>
<dbReference type="NCBIfam" id="TIGR00420">
    <property type="entry name" value="trmU"/>
    <property type="match status" value="1"/>
</dbReference>
<dbReference type="PANTHER" id="PTHR11933:SF5">
    <property type="entry name" value="MITOCHONDRIAL TRNA-SPECIFIC 2-THIOURIDYLASE 1"/>
    <property type="match status" value="1"/>
</dbReference>
<dbReference type="PANTHER" id="PTHR11933">
    <property type="entry name" value="TRNA 5-METHYLAMINOMETHYL-2-THIOURIDYLATE -METHYLTRANSFERASE"/>
    <property type="match status" value="1"/>
</dbReference>
<dbReference type="Pfam" id="PF03054">
    <property type="entry name" value="tRNA_Me_trans"/>
    <property type="match status" value="1"/>
</dbReference>
<dbReference type="Pfam" id="PF20258">
    <property type="entry name" value="tRNA_Me_trans_C"/>
    <property type="match status" value="1"/>
</dbReference>
<dbReference type="Pfam" id="PF20259">
    <property type="entry name" value="tRNA_Me_trans_M"/>
    <property type="match status" value="1"/>
</dbReference>
<dbReference type="SUPFAM" id="SSF52402">
    <property type="entry name" value="Adenine nucleotide alpha hydrolases-like"/>
    <property type="match status" value="1"/>
</dbReference>
<accession>Q2J6U1</accession>
<feature type="chain" id="PRO_1000009523" description="tRNA-specific 2-thiouridylase MnmA">
    <location>
        <begin position="1"/>
        <end position="352"/>
    </location>
</feature>
<feature type="region of interest" description="Interaction with tRNA" evidence="1">
    <location>
        <begin position="144"/>
        <end position="146"/>
    </location>
</feature>
<feature type="active site" description="Nucleophile" evidence="1">
    <location>
        <position position="101"/>
    </location>
</feature>
<feature type="active site" description="Cysteine persulfide intermediate" evidence="1">
    <location>
        <position position="194"/>
    </location>
</feature>
<feature type="binding site" evidence="1">
    <location>
        <begin position="6"/>
        <end position="13"/>
    </location>
    <ligand>
        <name>ATP</name>
        <dbReference type="ChEBI" id="CHEBI:30616"/>
    </ligand>
</feature>
<feature type="binding site" evidence="1">
    <location>
        <position position="32"/>
    </location>
    <ligand>
        <name>ATP</name>
        <dbReference type="ChEBI" id="CHEBI:30616"/>
    </ligand>
</feature>
<feature type="binding site" evidence="1">
    <location>
        <position position="125"/>
    </location>
    <ligand>
        <name>ATP</name>
        <dbReference type="ChEBI" id="CHEBI:30616"/>
    </ligand>
</feature>
<feature type="site" description="Interaction with tRNA" evidence="1">
    <location>
        <position position="126"/>
    </location>
</feature>
<feature type="site" description="Interaction with tRNA" evidence="1">
    <location>
        <position position="331"/>
    </location>
</feature>
<feature type="disulfide bond" description="Alternate" evidence="1">
    <location>
        <begin position="101"/>
        <end position="194"/>
    </location>
</feature>
<protein>
    <recommendedName>
        <fullName evidence="1">tRNA-specific 2-thiouridylase MnmA</fullName>
        <ecNumber evidence="1">2.8.1.13</ecNumber>
    </recommendedName>
</protein>